<evidence type="ECO:0000255" key="1">
    <source>
        <dbReference type="HAMAP-Rule" id="MF_00374"/>
    </source>
</evidence>
<evidence type="ECO:0000305" key="2"/>
<proteinExistence type="inferred from homology"/>
<accession>A9M3V8</accession>
<reference key="1">
    <citation type="journal article" date="2008" name="Genomics">
        <title>Characterization of ST-4821 complex, a unique Neisseria meningitidis clone.</title>
        <authorList>
            <person name="Peng J."/>
            <person name="Yang L."/>
            <person name="Yang F."/>
            <person name="Yang J."/>
            <person name="Yan Y."/>
            <person name="Nie H."/>
            <person name="Zhang X."/>
            <person name="Xiong Z."/>
            <person name="Jiang Y."/>
            <person name="Cheng F."/>
            <person name="Xu X."/>
            <person name="Chen S."/>
            <person name="Sun L."/>
            <person name="Li W."/>
            <person name="Shen Y."/>
            <person name="Shao Z."/>
            <person name="Liang X."/>
            <person name="Xu J."/>
            <person name="Jin Q."/>
        </authorList>
    </citation>
    <scope>NUCLEOTIDE SEQUENCE [LARGE SCALE GENOMIC DNA]</scope>
    <source>
        <strain>053442</strain>
    </source>
</reference>
<name>RL29_NEIM0</name>
<protein>
    <recommendedName>
        <fullName evidence="1">Large ribosomal subunit protein uL29</fullName>
    </recommendedName>
    <alternativeName>
        <fullName evidence="2">50S ribosomal protein L29</fullName>
    </alternativeName>
</protein>
<dbReference type="EMBL" id="CP000381">
    <property type="protein sequence ID" value="ABX74120.1"/>
    <property type="molecule type" value="Genomic_DNA"/>
</dbReference>
<dbReference type="RefSeq" id="WP_002215432.1">
    <property type="nucleotide sequence ID" value="NC_010120.1"/>
</dbReference>
<dbReference type="SMR" id="A9M3V8"/>
<dbReference type="GeneID" id="93387225"/>
<dbReference type="KEGG" id="nmn:NMCC_1997"/>
<dbReference type="HOGENOM" id="CLU_158491_1_2_4"/>
<dbReference type="Proteomes" id="UP000001177">
    <property type="component" value="Chromosome"/>
</dbReference>
<dbReference type="GO" id="GO:0022625">
    <property type="term" value="C:cytosolic large ribosomal subunit"/>
    <property type="evidence" value="ECO:0007669"/>
    <property type="project" value="TreeGrafter"/>
</dbReference>
<dbReference type="GO" id="GO:0003735">
    <property type="term" value="F:structural constituent of ribosome"/>
    <property type="evidence" value="ECO:0007669"/>
    <property type="project" value="InterPro"/>
</dbReference>
<dbReference type="GO" id="GO:0006412">
    <property type="term" value="P:translation"/>
    <property type="evidence" value="ECO:0007669"/>
    <property type="project" value="UniProtKB-UniRule"/>
</dbReference>
<dbReference type="CDD" id="cd00427">
    <property type="entry name" value="Ribosomal_L29_HIP"/>
    <property type="match status" value="1"/>
</dbReference>
<dbReference type="FunFam" id="1.10.287.310:FF:000001">
    <property type="entry name" value="50S ribosomal protein L29"/>
    <property type="match status" value="1"/>
</dbReference>
<dbReference type="Gene3D" id="1.10.287.310">
    <property type="match status" value="1"/>
</dbReference>
<dbReference type="HAMAP" id="MF_00374">
    <property type="entry name" value="Ribosomal_uL29"/>
    <property type="match status" value="1"/>
</dbReference>
<dbReference type="InterPro" id="IPR050063">
    <property type="entry name" value="Ribosomal_protein_uL29"/>
</dbReference>
<dbReference type="InterPro" id="IPR001854">
    <property type="entry name" value="Ribosomal_uL29"/>
</dbReference>
<dbReference type="InterPro" id="IPR018254">
    <property type="entry name" value="Ribosomal_uL29_CS"/>
</dbReference>
<dbReference type="InterPro" id="IPR036049">
    <property type="entry name" value="Ribosomal_uL29_sf"/>
</dbReference>
<dbReference type="NCBIfam" id="TIGR00012">
    <property type="entry name" value="L29"/>
    <property type="match status" value="1"/>
</dbReference>
<dbReference type="PANTHER" id="PTHR10916">
    <property type="entry name" value="60S RIBOSOMAL PROTEIN L35/50S RIBOSOMAL PROTEIN L29"/>
    <property type="match status" value="1"/>
</dbReference>
<dbReference type="PANTHER" id="PTHR10916:SF0">
    <property type="entry name" value="LARGE RIBOSOMAL SUBUNIT PROTEIN UL29C"/>
    <property type="match status" value="1"/>
</dbReference>
<dbReference type="Pfam" id="PF00831">
    <property type="entry name" value="Ribosomal_L29"/>
    <property type="match status" value="1"/>
</dbReference>
<dbReference type="SUPFAM" id="SSF46561">
    <property type="entry name" value="Ribosomal protein L29 (L29p)"/>
    <property type="match status" value="1"/>
</dbReference>
<dbReference type="PROSITE" id="PS00579">
    <property type="entry name" value="RIBOSOMAL_L29"/>
    <property type="match status" value="1"/>
</dbReference>
<gene>
    <name evidence="1" type="primary">rpmC</name>
    <name type="ordered locus">NMCC_1997</name>
</gene>
<comment type="similarity">
    <text evidence="1">Belongs to the universal ribosomal protein uL29 family.</text>
</comment>
<sequence length="63" mass="7078">MKANELKDKSVEQLNADLLDLLKAQFGLRMQNATGQLGKPSELKRVRRDIARIKTVLTEKGAK</sequence>
<organism>
    <name type="scientific">Neisseria meningitidis serogroup C (strain 053442)</name>
    <dbReference type="NCBI Taxonomy" id="374833"/>
    <lineage>
        <taxon>Bacteria</taxon>
        <taxon>Pseudomonadati</taxon>
        <taxon>Pseudomonadota</taxon>
        <taxon>Betaproteobacteria</taxon>
        <taxon>Neisseriales</taxon>
        <taxon>Neisseriaceae</taxon>
        <taxon>Neisseria</taxon>
    </lineage>
</organism>
<keyword id="KW-0687">Ribonucleoprotein</keyword>
<keyword id="KW-0689">Ribosomal protein</keyword>
<feature type="chain" id="PRO_1000079894" description="Large ribosomal subunit protein uL29">
    <location>
        <begin position="1"/>
        <end position="63"/>
    </location>
</feature>